<feature type="chain" id="PRO_0000337828" description="Bifunctional protein GlmU">
    <location>
        <begin position="1"/>
        <end position="411"/>
    </location>
</feature>
<feature type="region of interest" description="Pyrophosphorylase">
    <location>
        <begin position="1"/>
        <end position="204"/>
    </location>
</feature>
<feature type="region of interest" description="Linker">
    <location>
        <begin position="205"/>
        <end position="224"/>
    </location>
</feature>
<feature type="region of interest" description="N-acetyltransferase">
    <location>
        <begin position="225"/>
        <end position="411"/>
    </location>
</feature>
<feature type="active site" description="Proton acceptor" evidence="1">
    <location>
        <position position="308"/>
    </location>
</feature>
<feature type="binding site" evidence="1">
    <location>
        <begin position="6"/>
        <end position="9"/>
    </location>
    <ligand>
        <name>UTP</name>
        <dbReference type="ChEBI" id="CHEBI:46398"/>
    </ligand>
</feature>
<feature type="binding site" evidence="1">
    <location>
        <position position="74"/>
    </location>
    <ligand>
        <name>UTP</name>
        <dbReference type="ChEBI" id="CHEBI:46398"/>
    </ligand>
</feature>
<feature type="binding site" evidence="1">
    <location>
        <position position="79"/>
    </location>
    <ligand>
        <name>UTP</name>
        <dbReference type="ChEBI" id="CHEBI:46398"/>
    </ligand>
</feature>
<feature type="binding site" evidence="1">
    <location>
        <position position="80"/>
    </location>
    <ligand>
        <name>N-acetyl-alpha-D-glucosamine 1-phosphate</name>
        <dbReference type="ChEBI" id="CHEBI:57776"/>
    </ligand>
</feature>
<feature type="binding site" evidence="1">
    <location>
        <position position="132"/>
    </location>
    <ligand>
        <name>N-acetyl-alpha-D-glucosamine 1-phosphate</name>
        <dbReference type="ChEBI" id="CHEBI:57776"/>
    </ligand>
</feature>
<feature type="binding site" evidence="1">
    <location>
        <position position="144"/>
    </location>
    <ligand>
        <name>N-acetyl-alpha-D-glucosamine 1-phosphate</name>
        <dbReference type="ChEBI" id="CHEBI:57776"/>
    </ligand>
</feature>
<feature type="binding site" evidence="1">
    <location>
        <position position="158"/>
    </location>
    <ligand>
        <name>N-acetyl-alpha-D-glucosamine 1-phosphate</name>
        <dbReference type="ChEBI" id="CHEBI:57776"/>
    </ligand>
</feature>
<feature type="binding site" evidence="1">
    <location>
        <position position="384"/>
    </location>
    <ligand>
        <name>acetyl-CoA</name>
        <dbReference type="ChEBI" id="CHEBI:57288"/>
    </ligand>
</feature>
<feature type="binding site" evidence="1">
    <location>
        <position position="401"/>
    </location>
    <ligand>
        <name>acetyl-CoA</name>
        <dbReference type="ChEBI" id="CHEBI:57288"/>
    </ligand>
</feature>
<evidence type="ECO:0000250" key="1"/>
<evidence type="ECO:0000305" key="2"/>
<reference key="1">
    <citation type="submission" date="2007-06" db="EMBL/GenBank/DDBJ databases">
        <title>Complete sequence of Methanococcus aeolicus Nankai-3.</title>
        <authorList>
            <consortium name="US DOE Joint Genome Institute"/>
            <person name="Copeland A."/>
            <person name="Lucas S."/>
            <person name="Lapidus A."/>
            <person name="Barry K."/>
            <person name="Glavina del Rio T."/>
            <person name="Dalin E."/>
            <person name="Tice H."/>
            <person name="Pitluck S."/>
            <person name="Chain P."/>
            <person name="Malfatti S."/>
            <person name="Shin M."/>
            <person name="Vergez L."/>
            <person name="Schmutz J."/>
            <person name="Larimer F."/>
            <person name="Land M."/>
            <person name="Hauser L."/>
            <person name="Kyrpides N."/>
            <person name="Lykidis A."/>
            <person name="Sieprawska-Lupa M."/>
            <person name="Whitman W.B."/>
            <person name="Richardson P."/>
        </authorList>
    </citation>
    <scope>NUCLEOTIDE SEQUENCE [LARGE SCALE GENOMIC DNA]</scope>
    <source>
        <strain>ATCC BAA-1280 / DSM 17508 / OCM 812 / Nankai-3</strain>
    </source>
</reference>
<gene>
    <name type="ordered locus">Maeo_0642</name>
</gene>
<sequence>MDAVILCAGKGTRLMPLTENIPKPMLPVGGAPILERIINKIDKLVENIYLIVKYEKEIIINHFKNNDKIKFIEQTDIDGTGYAVLMAKNHISGDFLVINGDIIFDDDLTNIVNDDVKNIITLNEVDNPSNFGVIVVDNQNNIIELQEKPKNPKSNLINAGIYKFENKIFDILETLRPSERGEVELTDAIKELIKENNIKGIKLNGYWNDIGKPWDLLDANTHILKNIKTDIKGKIGKNVVIEGAVIIEEGTEIKPNTVIEGPAIIKSGAIVGPLAHIRPNTVLMENTGVGNSSEIKGSIIMKNSKVPHLSYIGDSIIGENCNMGCNTITANLRFDNKPVMVNIKEEKVKSVRKFGAIIGHNVKTGIQVSFMPGVKIGSNSWIGANCLINNDIEKDSFVYKKEEIIIKTKRK</sequence>
<accession>A6UUQ4</accession>
<dbReference type="EC" id="2.7.7.23"/>
<dbReference type="EC" id="2.3.1.157"/>
<dbReference type="EMBL" id="CP000743">
    <property type="protein sequence ID" value="ABR56226.1"/>
    <property type="molecule type" value="Genomic_DNA"/>
</dbReference>
<dbReference type="RefSeq" id="WP_011973358.1">
    <property type="nucleotide sequence ID" value="NC_009635.1"/>
</dbReference>
<dbReference type="SMR" id="A6UUQ4"/>
<dbReference type="STRING" id="419665.Maeo_0642"/>
<dbReference type="GeneID" id="5326905"/>
<dbReference type="KEGG" id="mae:Maeo_0642"/>
<dbReference type="eggNOG" id="arCOG00666">
    <property type="taxonomic scope" value="Archaea"/>
</dbReference>
<dbReference type="HOGENOM" id="CLU_029499_0_1_2"/>
<dbReference type="OrthoDB" id="15372at2157"/>
<dbReference type="UniPathway" id="UPA00113">
    <property type="reaction ID" value="UER00532"/>
</dbReference>
<dbReference type="UniPathway" id="UPA00113">
    <property type="reaction ID" value="UER00533"/>
</dbReference>
<dbReference type="Proteomes" id="UP000001106">
    <property type="component" value="Chromosome"/>
</dbReference>
<dbReference type="GO" id="GO:0019134">
    <property type="term" value="F:glucosamine-1-phosphate N-acetyltransferase activity"/>
    <property type="evidence" value="ECO:0007669"/>
    <property type="project" value="UniProtKB-EC"/>
</dbReference>
<dbReference type="GO" id="GO:0003977">
    <property type="term" value="F:UDP-N-acetylglucosamine diphosphorylase activity"/>
    <property type="evidence" value="ECO:0007669"/>
    <property type="project" value="UniProtKB-EC"/>
</dbReference>
<dbReference type="GO" id="GO:0006048">
    <property type="term" value="P:UDP-N-acetylglucosamine biosynthetic process"/>
    <property type="evidence" value="ECO:0007669"/>
    <property type="project" value="UniProtKB-UniPathway"/>
</dbReference>
<dbReference type="CDD" id="cd05636">
    <property type="entry name" value="LbH_G1P_TT_C_like"/>
    <property type="match status" value="1"/>
</dbReference>
<dbReference type="CDD" id="cd04181">
    <property type="entry name" value="NTP_transferase"/>
    <property type="match status" value="1"/>
</dbReference>
<dbReference type="Gene3D" id="2.160.10.10">
    <property type="entry name" value="Hexapeptide repeat proteins"/>
    <property type="match status" value="1"/>
</dbReference>
<dbReference type="Gene3D" id="3.90.550.10">
    <property type="entry name" value="Spore Coat Polysaccharide Biosynthesis Protein SpsA, Chain A"/>
    <property type="match status" value="1"/>
</dbReference>
<dbReference type="InterPro" id="IPR023915">
    <property type="entry name" value="Bifunctiontional_GlmU_arc-type"/>
</dbReference>
<dbReference type="InterPro" id="IPR050065">
    <property type="entry name" value="GlmU-like"/>
</dbReference>
<dbReference type="InterPro" id="IPR001451">
    <property type="entry name" value="Hexapep"/>
</dbReference>
<dbReference type="InterPro" id="IPR005835">
    <property type="entry name" value="NTP_transferase_dom"/>
</dbReference>
<dbReference type="InterPro" id="IPR029044">
    <property type="entry name" value="Nucleotide-diphossugar_trans"/>
</dbReference>
<dbReference type="InterPro" id="IPR011004">
    <property type="entry name" value="Trimer_LpxA-like_sf"/>
</dbReference>
<dbReference type="NCBIfam" id="TIGR03992">
    <property type="entry name" value="Arch_glmU"/>
    <property type="match status" value="1"/>
</dbReference>
<dbReference type="PANTHER" id="PTHR43584:SF8">
    <property type="entry name" value="N-ACETYLMURAMATE ALPHA-1-PHOSPHATE URIDYLYLTRANSFERASE"/>
    <property type="match status" value="1"/>
</dbReference>
<dbReference type="PANTHER" id="PTHR43584">
    <property type="entry name" value="NUCLEOTIDYL TRANSFERASE"/>
    <property type="match status" value="1"/>
</dbReference>
<dbReference type="Pfam" id="PF00132">
    <property type="entry name" value="Hexapep"/>
    <property type="match status" value="1"/>
</dbReference>
<dbReference type="Pfam" id="PF00483">
    <property type="entry name" value="NTP_transferase"/>
    <property type="match status" value="1"/>
</dbReference>
<dbReference type="SUPFAM" id="SSF53448">
    <property type="entry name" value="Nucleotide-diphospho-sugar transferases"/>
    <property type="match status" value="1"/>
</dbReference>
<dbReference type="SUPFAM" id="SSF51161">
    <property type="entry name" value="Trimeric LpxA-like enzymes"/>
    <property type="match status" value="1"/>
</dbReference>
<name>GLMU_META3</name>
<keyword id="KW-0012">Acyltransferase</keyword>
<keyword id="KW-0511">Multifunctional enzyme</keyword>
<keyword id="KW-0548">Nucleotidyltransferase</keyword>
<keyword id="KW-0677">Repeat</keyword>
<keyword id="KW-0808">Transferase</keyword>
<protein>
    <recommendedName>
        <fullName>Bifunctional protein GlmU</fullName>
    </recommendedName>
    <domain>
        <recommendedName>
            <fullName>UDP-N-acetylglucosamine pyrophosphorylase</fullName>
            <ecNumber>2.7.7.23</ecNumber>
        </recommendedName>
        <alternativeName>
            <fullName>N-acetylglucosamine-1-phosphate uridyltransferase</fullName>
        </alternativeName>
    </domain>
    <domain>
        <recommendedName>
            <fullName>Glucosamine-1-phosphate N-acetyltransferase</fullName>
            <ecNumber>2.3.1.157</ecNumber>
        </recommendedName>
    </domain>
</protein>
<organism>
    <name type="scientific">Methanococcus aeolicus (strain ATCC BAA-1280 / DSM 17508 / OCM 812 / Nankai-3)</name>
    <dbReference type="NCBI Taxonomy" id="419665"/>
    <lineage>
        <taxon>Archaea</taxon>
        <taxon>Methanobacteriati</taxon>
        <taxon>Methanobacteriota</taxon>
        <taxon>Methanomada group</taxon>
        <taxon>Methanococci</taxon>
        <taxon>Methanococcales</taxon>
        <taxon>Methanococcaceae</taxon>
        <taxon>Methanococcus</taxon>
    </lineage>
</organism>
<comment type="function">
    <text evidence="1">Catalyzes the last two sequential reactions in the de novo biosynthetic pathway for UDP-N-acetyl-glucosamine (UDP-GlcNAc). Responsible for the acetylation of GlcN-1-P to GlcNAc-1-P, and for the uridyl transfer from UTP to GlcNAc-1-P, to produce UDP-GlcNAc and pyrophosphate (By similarity).</text>
</comment>
<comment type="catalytic activity">
    <reaction>
        <text>N-acetyl-alpha-D-glucosamine 1-phosphate + UTP + H(+) = UDP-N-acetyl-alpha-D-glucosamine + diphosphate</text>
        <dbReference type="Rhea" id="RHEA:13509"/>
        <dbReference type="ChEBI" id="CHEBI:15378"/>
        <dbReference type="ChEBI" id="CHEBI:33019"/>
        <dbReference type="ChEBI" id="CHEBI:46398"/>
        <dbReference type="ChEBI" id="CHEBI:57705"/>
        <dbReference type="ChEBI" id="CHEBI:57776"/>
        <dbReference type="EC" id="2.7.7.23"/>
    </reaction>
</comment>
<comment type="catalytic activity">
    <reaction>
        <text>alpha-D-glucosamine 1-phosphate + acetyl-CoA = N-acetyl-alpha-D-glucosamine 1-phosphate + CoA + H(+)</text>
        <dbReference type="Rhea" id="RHEA:13725"/>
        <dbReference type="ChEBI" id="CHEBI:15378"/>
        <dbReference type="ChEBI" id="CHEBI:57287"/>
        <dbReference type="ChEBI" id="CHEBI:57288"/>
        <dbReference type="ChEBI" id="CHEBI:57776"/>
        <dbReference type="ChEBI" id="CHEBI:58516"/>
        <dbReference type="EC" id="2.3.1.157"/>
    </reaction>
</comment>
<comment type="pathway">
    <text>Nucleotide-sugar biosynthesis; UDP-N-acetyl-alpha-D-glucosamine biosynthesis; N-acetyl-alpha-D-glucosamine 1-phosphate from alpha-D-glucosamine 6-phosphate (route II): step 2/2.</text>
</comment>
<comment type="pathway">
    <text>Nucleotide-sugar biosynthesis; UDP-N-acetyl-alpha-D-glucosamine biosynthesis; UDP-N-acetyl-alpha-D-glucosamine from N-acetyl-alpha-D-glucosamine 1-phosphate: step 1/1.</text>
</comment>
<comment type="similarity">
    <text evidence="2">In the N-terminal section; belongs to the N-acetylglucosamine-1-phosphate uridyltransferase family.</text>
</comment>
<comment type="similarity">
    <text evidence="2">In the C-terminal section; belongs to the transferase hexapeptide repeat family.</text>
</comment>
<proteinExistence type="inferred from homology"/>